<reference key="1">
    <citation type="journal article" date="2004" name="Nat. Genet.">
        <title>Complete sequencing and characterization of 21,243 full-length human cDNAs.</title>
        <authorList>
            <person name="Ota T."/>
            <person name="Suzuki Y."/>
            <person name="Nishikawa T."/>
            <person name="Otsuki T."/>
            <person name="Sugiyama T."/>
            <person name="Irie R."/>
            <person name="Wakamatsu A."/>
            <person name="Hayashi K."/>
            <person name="Sato H."/>
            <person name="Nagai K."/>
            <person name="Kimura K."/>
            <person name="Makita H."/>
            <person name="Sekine M."/>
            <person name="Obayashi M."/>
            <person name="Nishi T."/>
            <person name="Shibahara T."/>
            <person name="Tanaka T."/>
            <person name="Ishii S."/>
            <person name="Yamamoto J."/>
            <person name="Saito K."/>
            <person name="Kawai Y."/>
            <person name="Isono Y."/>
            <person name="Nakamura Y."/>
            <person name="Nagahari K."/>
            <person name="Murakami K."/>
            <person name="Yasuda T."/>
            <person name="Iwayanagi T."/>
            <person name="Wagatsuma M."/>
            <person name="Shiratori A."/>
            <person name="Sudo H."/>
            <person name="Hosoiri T."/>
            <person name="Kaku Y."/>
            <person name="Kodaira H."/>
            <person name="Kondo H."/>
            <person name="Sugawara M."/>
            <person name="Takahashi M."/>
            <person name="Kanda K."/>
            <person name="Yokoi T."/>
            <person name="Furuya T."/>
            <person name="Kikkawa E."/>
            <person name="Omura Y."/>
            <person name="Abe K."/>
            <person name="Kamihara K."/>
            <person name="Katsuta N."/>
            <person name="Sato K."/>
            <person name="Tanikawa M."/>
            <person name="Yamazaki M."/>
            <person name="Ninomiya K."/>
            <person name="Ishibashi T."/>
            <person name="Yamashita H."/>
            <person name="Murakawa K."/>
            <person name="Fujimori K."/>
            <person name="Tanai H."/>
            <person name="Kimata M."/>
            <person name="Watanabe M."/>
            <person name="Hiraoka S."/>
            <person name="Chiba Y."/>
            <person name="Ishida S."/>
            <person name="Ono Y."/>
            <person name="Takiguchi S."/>
            <person name="Watanabe S."/>
            <person name="Yosida M."/>
            <person name="Hotuta T."/>
            <person name="Kusano J."/>
            <person name="Kanehori K."/>
            <person name="Takahashi-Fujii A."/>
            <person name="Hara H."/>
            <person name="Tanase T.-O."/>
            <person name="Nomura Y."/>
            <person name="Togiya S."/>
            <person name="Komai F."/>
            <person name="Hara R."/>
            <person name="Takeuchi K."/>
            <person name="Arita M."/>
            <person name="Imose N."/>
            <person name="Musashino K."/>
            <person name="Yuuki H."/>
            <person name="Oshima A."/>
            <person name="Sasaki N."/>
            <person name="Aotsuka S."/>
            <person name="Yoshikawa Y."/>
            <person name="Matsunawa H."/>
            <person name="Ichihara T."/>
            <person name="Shiohata N."/>
            <person name="Sano S."/>
            <person name="Moriya S."/>
            <person name="Momiyama H."/>
            <person name="Satoh N."/>
            <person name="Takami S."/>
            <person name="Terashima Y."/>
            <person name="Suzuki O."/>
            <person name="Nakagawa S."/>
            <person name="Senoh A."/>
            <person name="Mizoguchi H."/>
            <person name="Goto Y."/>
            <person name="Shimizu F."/>
            <person name="Wakebe H."/>
            <person name="Hishigaki H."/>
            <person name="Watanabe T."/>
            <person name="Sugiyama A."/>
            <person name="Takemoto M."/>
            <person name="Kawakami B."/>
            <person name="Yamazaki M."/>
            <person name="Watanabe K."/>
            <person name="Kumagai A."/>
            <person name="Itakura S."/>
            <person name="Fukuzumi Y."/>
            <person name="Fujimori Y."/>
            <person name="Komiyama M."/>
            <person name="Tashiro H."/>
            <person name="Tanigami A."/>
            <person name="Fujiwara T."/>
            <person name="Ono T."/>
            <person name="Yamada K."/>
            <person name="Fujii Y."/>
            <person name="Ozaki K."/>
            <person name="Hirao M."/>
            <person name="Ohmori Y."/>
            <person name="Kawabata A."/>
            <person name="Hikiji T."/>
            <person name="Kobatake N."/>
            <person name="Inagaki H."/>
            <person name="Ikema Y."/>
            <person name="Okamoto S."/>
            <person name="Okitani R."/>
            <person name="Kawakami T."/>
            <person name="Noguchi S."/>
            <person name="Itoh T."/>
            <person name="Shigeta K."/>
            <person name="Senba T."/>
            <person name="Matsumura K."/>
            <person name="Nakajima Y."/>
            <person name="Mizuno T."/>
            <person name="Morinaga M."/>
            <person name="Sasaki M."/>
            <person name="Togashi T."/>
            <person name="Oyama M."/>
            <person name="Hata H."/>
            <person name="Watanabe M."/>
            <person name="Komatsu T."/>
            <person name="Mizushima-Sugano J."/>
            <person name="Satoh T."/>
            <person name="Shirai Y."/>
            <person name="Takahashi Y."/>
            <person name="Nakagawa K."/>
            <person name="Okumura K."/>
            <person name="Nagase T."/>
            <person name="Nomura N."/>
            <person name="Kikuchi H."/>
            <person name="Masuho Y."/>
            <person name="Yamashita R."/>
            <person name="Nakai K."/>
            <person name="Yada T."/>
            <person name="Nakamura Y."/>
            <person name="Ohara O."/>
            <person name="Isogai T."/>
            <person name="Sugano S."/>
        </authorList>
    </citation>
    <scope>NUCLEOTIDE SEQUENCE [LARGE SCALE MRNA]</scope>
    <source>
        <tissue>Testis</tissue>
    </source>
</reference>
<organism>
    <name type="scientific">Homo sapiens</name>
    <name type="common">Human</name>
    <dbReference type="NCBI Taxonomy" id="9606"/>
    <lineage>
        <taxon>Eukaryota</taxon>
        <taxon>Metazoa</taxon>
        <taxon>Chordata</taxon>
        <taxon>Craniata</taxon>
        <taxon>Vertebrata</taxon>
        <taxon>Euteleostomi</taxon>
        <taxon>Mammalia</taxon>
        <taxon>Eutheria</taxon>
        <taxon>Euarchontoglires</taxon>
        <taxon>Primates</taxon>
        <taxon>Haplorrhini</taxon>
        <taxon>Catarrhini</taxon>
        <taxon>Hominidae</taxon>
        <taxon>Homo</taxon>
    </lineage>
</organism>
<dbReference type="EMBL" id="AK128114">
    <property type="protein sequence ID" value="BAC87281.1"/>
    <property type="molecule type" value="mRNA"/>
</dbReference>
<dbReference type="BioMuta" id="-"/>
<dbReference type="DMDM" id="74711200"/>
<dbReference type="MassIVE" id="Q6ZRM9"/>
<dbReference type="neXtProt" id="NX_Q6ZRM9"/>
<dbReference type="eggNOG" id="ENOG502TF6X">
    <property type="taxonomic scope" value="Eukaryota"/>
</dbReference>
<dbReference type="InParanoid" id="Q6ZRM9"/>
<dbReference type="PAN-GO" id="Q6ZRM9">
    <property type="GO annotations" value="0 GO annotations based on evolutionary models"/>
</dbReference>
<dbReference type="PhylomeDB" id="Q6ZRM9"/>
<dbReference type="Pharos" id="Q6ZRM9">
    <property type="development level" value="Tdark"/>
</dbReference>
<dbReference type="Proteomes" id="UP000005640">
    <property type="component" value="Unplaced"/>
</dbReference>
<dbReference type="RNAct" id="Q6ZRM9">
    <property type="molecule type" value="protein"/>
</dbReference>
<dbReference type="InterPro" id="IPR031572">
    <property type="entry name" value="DUF4705"/>
</dbReference>
<dbReference type="PANTHER" id="PTHR37553">
    <property type="entry name" value="DUF4705 DOMAIN-CONTAINING PROTEIN"/>
    <property type="match status" value="1"/>
</dbReference>
<dbReference type="PANTHER" id="PTHR37553:SF6">
    <property type="entry name" value="DUF4705 DOMAIN-CONTAINING PROTEIN"/>
    <property type="match status" value="1"/>
</dbReference>
<dbReference type="Pfam" id="PF15788">
    <property type="entry name" value="DUF4705"/>
    <property type="match status" value="2"/>
</dbReference>
<keyword id="KW-1185">Reference proteome</keyword>
<proteinExistence type="evidence at transcript level"/>
<protein>
    <recommendedName>
        <fullName>Putative uncharacterized protein FLJ46235</fullName>
    </recommendedName>
</protein>
<sequence length="215" mass="21770">MASGRWASPGPAWASRRPLQAQVVLKSASPGPAPASQQASSFGSAPAQLPPAFVDPELSPAMLLSPTCLPVACTGPGLAGEQPLQAPLLPPRGISRPSSGLTAASRDQVPACLPAACVRPSSSVTVACSGPTHASGTLSRGVSPCLTLASLTLREFSVGPCLTLASLTLREVSMSPCLTLVSLTLRAILPHAGLLRPSSCLCWPFQAQPLPVGGL</sequence>
<feature type="chain" id="PRO_0000329439" description="Putative uncharacterized protein FLJ46235">
    <location>
        <begin position="1"/>
        <end position="215"/>
    </location>
</feature>
<feature type="region of interest" description="Disordered" evidence="1">
    <location>
        <begin position="25"/>
        <end position="48"/>
    </location>
</feature>
<feature type="compositionally biased region" description="Low complexity" evidence="1">
    <location>
        <begin position="27"/>
        <end position="47"/>
    </location>
</feature>
<feature type="sequence variant" id="VAR_042676" description="In dbSNP:rs12667117.">
    <original>A</original>
    <variation>V</variation>
    <location>
        <position position="149"/>
    </location>
</feature>
<feature type="sequence variant" id="VAR_042677" description="In dbSNP:rs12671601.">
    <original>V</original>
    <variation>M</variation>
    <location>
        <position position="158"/>
    </location>
</feature>
<feature type="sequence variant" id="VAR_042678" description="In dbSNP:rs10274643.">
    <original>F</original>
    <variation>L</variation>
    <location>
        <position position="205"/>
    </location>
</feature>
<evidence type="ECO:0000256" key="1">
    <source>
        <dbReference type="SAM" id="MobiDB-lite"/>
    </source>
</evidence>
<accession>Q6ZRM9</accession>
<name>YG024_HUMAN</name>